<accession>Q9CPF0</accession>
<evidence type="ECO:0000255" key="1">
    <source>
        <dbReference type="HAMAP-Rule" id="MF_01807"/>
    </source>
</evidence>
<evidence type="ECO:0000255" key="2">
    <source>
        <dbReference type="PROSITE-ProRule" id="PRU01246"/>
    </source>
</evidence>
<evidence type="ECO:0000255" key="3">
    <source>
        <dbReference type="PROSITE-ProRule" id="PRU01248"/>
    </source>
</evidence>
<gene>
    <name evidence="1" type="primary">xerD</name>
    <name type="ordered locus">PM0093</name>
</gene>
<reference key="1">
    <citation type="journal article" date="2001" name="Proc. Natl. Acad. Sci. U.S.A.">
        <title>Complete genomic sequence of Pasteurella multocida Pm70.</title>
        <authorList>
            <person name="May B.J."/>
            <person name="Zhang Q."/>
            <person name="Li L.L."/>
            <person name="Paustian M.L."/>
            <person name="Whittam T.S."/>
            <person name="Kapur V."/>
        </authorList>
    </citation>
    <scope>NUCLEOTIDE SEQUENCE [LARGE SCALE GENOMIC DNA]</scope>
    <source>
        <strain>Pm70</strain>
    </source>
</reference>
<name>XERD_PASMU</name>
<keyword id="KW-0131">Cell cycle</keyword>
<keyword id="KW-0132">Cell division</keyword>
<keyword id="KW-0159">Chromosome partition</keyword>
<keyword id="KW-0963">Cytoplasm</keyword>
<keyword id="KW-0229">DNA integration</keyword>
<keyword id="KW-0233">DNA recombination</keyword>
<keyword id="KW-0238">DNA-binding</keyword>
<keyword id="KW-1185">Reference proteome</keyword>
<sequence length="297" mass="34369">MKDSALIELFLNEIWIEKQLSQNTIASYRLDLTALIQWLEKQQLTLINLDAIDLQTFLGERLNQGYKATSTARLLSAMRKLFQYLYREKYRTDDPSAVLSSPKLPSRLPKYLTEQQVTDLLNSPDVDIPLELRDKAMMELLYATGLRVTELVSLTIENININQGIVRVVGKGNKERIVPIGEEATYWIRQFMLYGRPFLLHGQSSDVVFPSKRALQMTRQTFWHRIKHYALLSDIDINSLSPHVLRHAFATHLVNHGADLRVVQMLLGHSDLSTTQIYTHVAKERLKHLHERYHPRG</sequence>
<organism>
    <name type="scientific">Pasteurella multocida (strain Pm70)</name>
    <dbReference type="NCBI Taxonomy" id="272843"/>
    <lineage>
        <taxon>Bacteria</taxon>
        <taxon>Pseudomonadati</taxon>
        <taxon>Pseudomonadota</taxon>
        <taxon>Gammaproteobacteria</taxon>
        <taxon>Pasteurellales</taxon>
        <taxon>Pasteurellaceae</taxon>
        <taxon>Pasteurella</taxon>
    </lineage>
</organism>
<dbReference type="EMBL" id="AE004439">
    <property type="protein sequence ID" value="AAK02177.1"/>
    <property type="molecule type" value="Genomic_DNA"/>
</dbReference>
<dbReference type="RefSeq" id="WP_010906477.1">
    <property type="nucleotide sequence ID" value="NC_002663.1"/>
</dbReference>
<dbReference type="SMR" id="Q9CPF0"/>
<dbReference type="STRING" id="272843.PM0093"/>
<dbReference type="EnsemblBacteria" id="AAK02177">
    <property type="protein sequence ID" value="AAK02177"/>
    <property type="gene ID" value="PM0093"/>
</dbReference>
<dbReference type="KEGG" id="pmu:PM0093"/>
<dbReference type="HOGENOM" id="CLU_027562_9_6_6"/>
<dbReference type="OrthoDB" id="9801717at2"/>
<dbReference type="Proteomes" id="UP000000809">
    <property type="component" value="Chromosome"/>
</dbReference>
<dbReference type="GO" id="GO:0005737">
    <property type="term" value="C:cytoplasm"/>
    <property type="evidence" value="ECO:0007669"/>
    <property type="project" value="UniProtKB-SubCell"/>
</dbReference>
<dbReference type="GO" id="GO:0003677">
    <property type="term" value="F:DNA binding"/>
    <property type="evidence" value="ECO:0007669"/>
    <property type="project" value="UniProtKB-KW"/>
</dbReference>
<dbReference type="GO" id="GO:0009037">
    <property type="term" value="F:tyrosine-based site-specific recombinase activity"/>
    <property type="evidence" value="ECO:0007669"/>
    <property type="project" value="UniProtKB-UniRule"/>
</dbReference>
<dbReference type="GO" id="GO:0051301">
    <property type="term" value="P:cell division"/>
    <property type="evidence" value="ECO:0007669"/>
    <property type="project" value="UniProtKB-KW"/>
</dbReference>
<dbReference type="GO" id="GO:0007059">
    <property type="term" value="P:chromosome segregation"/>
    <property type="evidence" value="ECO:0007669"/>
    <property type="project" value="UniProtKB-UniRule"/>
</dbReference>
<dbReference type="GO" id="GO:0006313">
    <property type="term" value="P:DNA transposition"/>
    <property type="evidence" value="ECO:0007669"/>
    <property type="project" value="UniProtKB-UniRule"/>
</dbReference>
<dbReference type="CDD" id="cd00798">
    <property type="entry name" value="INT_XerDC_C"/>
    <property type="match status" value="1"/>
</dbReference>
<dbReference type="Gene3D" id="1.10.150.130">
    <property type="match status" value="1"/>
</dbReference>
<dbReference type="Gene3D" id="1.10.443.10">
    <property type="entry name" value="Intergrase catalytic core"/>
    <property type="match status" value="1"/>
</dbReference>
<dbReference type="HAMAP" id="MF_01808">
    <property type="entry name" value="Recomb_XerC_XerD"/>
    <property type="match status" value="1"/>
</dbReference>
<dbReference type="HAMAP" id="MF_01807">
    <property type="entry name" value="Recomb_XerD"/>
    <property type="match status" value="1"/>
</dbReference>
<dbReference type="InterPro" id="IPR044068">
    <property type="entry name" value="CB"/>
</dbReference>
<dbReference type="InterPro" id="IPR011010">
    <property type="entry name" value="DNA_brk_join_enz"/>
</dbReference>
<dbReference type="InterPro" id="IPR013762">
    <property type="entry name" value="Integrase-like_cat_sf"/>
</dbReference>
<dbReference type="InterPro" id="IPR002104">
    <property type="entry name" value="Integrase_catalytic"/>
</dbReference>
<dbReference type="InterPro" id="IPR010998">
    <property type="entry name" value="Integrase_recombinase_N"/>
</dbReference>
<dbReference type="InterPro" id="IPR004107">
    <property type="entry name" value="Integrase_SAM-like_N"/>
</dbReference>
<dbReference type="InterPro" id="IPR011932">
    <property type="entry name" value="Recomb_XerD"/>
</dbReference>
<dbReference type="InterPro" id="IPR023009">
    <property type="entry name" value="Tyrosine_recombinase_XerC/XerD"/>
</dbReference>
<dbReference type="InterPro" id="IPR050090">
    <property type="entry name" value="Tyrosine_recombinase_XerCD"/>
</dbReference>
<dbReference type="NCBIfam" id="NF001399">
    <property type="entry name" value="PRK00283.1"/>
    <property type="match status" value="1"/>
</dbReference>
<dbReference type="NCBIfam" id="TIGR02225">
    <property type="entry name" value="recomb_XerD"/>
    <property type="match status" value="1"/>
</dbReference>
<dbReference type="PANTHER" id="PTHR30349">
    <property type="entry name" value="PHAGE INTEGRASE-RELATED"/>
    <property type="match status" value="1"/>
</dbReference>
<dbReference type="PANTHER" id="PTHR30349:SF90">
    <property type="entry name" value="TYROSINE RECOMBINASE XERD"/>
    <property type="match status" value="1"/>
</dbReference>
<dbReference type="Pfam" id="PF02899">
    <property type="entry name" value="Phage_int_SAM_1"/>
    <property type="match status" value="1"/>
</dbReference>
<dbReference type="Pfam" id="PF00589">
    <property type="entry name" value="Phage_integrase"/>
    <property type="match status" value="1"/>
</dbReference>
<dbReference type="SUPFAM" id="SSF56349">
    <property type="entry name" value="DNA breaking-rejoining enzymes"/>
    <property type="match status" value="1"/>
</dbReference>
<dbReference type="PROSITE" id="PS51900">
    <property type="entry name" value="CB"/>
    <property type="match status" value="1"/>
</dbReference>
<dbReference type="PROSITE" id="PS51898">
    <property type="entry name" value="TYR_RECOMBINASE"/>
    <property type="match status" value="1"/>
</dbReference>
<protein>
    <recommendedName>
        <fullName evidence="1">Tyrosine recombinase XerD</fullName>
    </recommendedName>
</protein>
<proteinExistence type="inferred from homology"/>
<comment type="function">
    <text evidence="1">Site-specific tyrosine recombinase, which acts by catalyzing the cutting and rejoining of the recombining DNA molecules. The XerC-XerD complex is essential to convert dimers of the bacterial chromosome into monomers to permit their segregation at cell division. It also contributes to the segregational stability of plasmids.</text>
</comment>
<comment type="subunit">
    <text evidence="1">Forms a cyclic heterotetrameric complex composed of two molecules of XerC and two molecules of XerD.</text>
</comment>
<comment type="subcellular location">
    <subcellularLocation>
        <location evidence="1">Cytoplasm</location>
    </subcellularLocation>
</comment>
<comment type="similarity">
    <text evidence="1">Belongs to the 'phage' integrase family. XerD subfamily.</text>
</comment>
<feature type="chain" id="PRO_0000095403" description="Tyrosine recombinase XerD">
    <location>
        <begin position="1"/>
        <end position="297"/>
    </location>
</feature>
<feature type="domain" description="Core-binding (CB)" evidence="3">
    <location>
        <begin position="1"/>
        <end position="86"/>
    </location>
</feature>
<feature type="domain" description="Tyr recombinase" evidence="2">
    <location>
        <begin position="107"/>
        <end position="291"/>
    </location>
</feature>
<feature type="active site" evidence="1">
    <location>
        <position position="147"/>
    </location>
</feature>
<feature type="active site" evidence="1">
    <location>
        <position position="171"/>
    </location>
</feature>
<feature type="active site" evidence="1">
    <location>
        <position position="243"/>
    </location>
</feature>
<feature type="active site" evidence="1">
    <location>
        <position position="246"/>
    </location>
</feature>
<feature type="active site" evidence="1">
    <location>
        <position position="269"/>
    </location>
</feature>
<feature type="active site" description="O-(3'-phospho-DNA)-tyrosine intermediate" evidence="1">
    <location>
        <position position="278"/>
    </location>
</feature>